<sequence length="442" mass="47871">MENAKMNSLIAQYPLVKDLVALKETTWFNPGTTSLAEGLPYVGLTEQDVQDAHARLSRFAPYLAKAFPETAATGGIIESELVAIPAMQKRLEKEYQQPISGQLLLKKDSHLPISGSIKARGGIYEVLAHAEKLALEAGLLTLDDDYSKLLSPEFKQFFSQYSIAVGSTGNLGLSIGIMSARIGFKVTVHMSADARAWKKAKLRSHGVTVVEYEQDYGVAVEEGRKAAQSDPNCFFIDDENSRTLFLGYSVAGQRLKAQFAQQGRIVDADNPLFVYLPCGVGGGPGGVAFGLKLAFGDHVHCFFAEPTHSPCMLLGVHTGLHDQISVQDIGIDNLTAADGLAVGRASGFVGRAMERLLDGFYTLSDQTMYDMLGWLAQEEGIRLEPSALAGMAGPQRVCASVSYQQMHGFSAEQLRNATHLVWATGGGMVPEEEMNQYLAKGR</sequence>
<reference key="1">
    <citation type="journal article" date="2009" name="PLoS Genet.">
        <title>Organised genome dynamics in the Escherichia coli species results in highly diverse adaptive paths.</title>
        <authorList>
            <person name="Touchon M."/>
            <person name="Hoede C."/>
            <person name="Tenaillon O."/>
            <person name="Barbe V."/>
            <person name="Baeriswyl S."/>
            <person name="Bidet P."/>
            <person name="Bingen E."/>
            <person name="Bonacorsi S."/>
            <person name="Bouchier C."/>
            <person name="Bouvet O."/>
            <person name="Calteau A."/>
            <person name="Chiapello H."/>
            <person name="Clermont O."/>
            <person name="Cruveiller S."/>
            <person name="Danchin A."/>
            <person name="Diard M."/>
            <person name="Dossat C."/>
            <person name="Karoui M.E."/>
            <person name="Frapy E."/>
            <person name="Garry L."/>
            <person name="Ghigo J.M."/>
            <person name="Gilles A.M."/>
            <person name="Johnson J."/>
            <person name="Le Bouguenec C."/>
            <person name="Lescat M."/>
            <person name="Mangenot S."/>
            <person name="Martinez-Jehanne V."/>
            <person name="Matic I."/>
            <person name="Nassif X."/>
            <person name="Oztas S."/>
            <person name="Petit M.A."/>
            <person name="Pichon C."/>
            <person name="Rouy Z."/>
            <person name="Ruf C.S."/>
            <person name="Schneider D."/>
            <person name="Tourret J."/>
            <person name="Vacherie B."/>
            <person name="Vallenet D."/>
            <person name="Medigue C."/>
            <person name="Rocha E.P.C."/>
            <person name="Denamur E."/>
        </authorList>
    </citation>
    <scope>NUCLEOTIDE SEQUENCE [LARGE SCALE GENOMIC DNA]</scope>
    <source>
        <strain>IAI1</strain>
    </source>
</reference>
<organism>
    <name type="scientific">Escherichia coli O8 (strain IAI1)</name>
    <dbReference type="NCBI Taxonomy" id="585034"/>
    <lineage>
        <taxon>Bacteria</taxon>
        <taxon>Pseudomonadati</taxon>
        <taxon>Pseudomonadota</taxon>
        <taxon>Gammaproteobacteria</taxon>
        <taxon>Enterobacterales</taxon>
        <taxon>Enterobacteriaceae</taxon>
        <taxon>Escherichia</taxon>
    </lineage>
</organism>
<proteinExistence type="inferred from homology"/>
<keyword id="KW-0456">Lyase</keyword>
<keyword id="KW-0663">Pyridoxal phosphate</keyword>
<protein>
    <recommendedName>
        <fullName evidence="1">D-serine dehydratase</fullName>
        <ecNumber evidence="1">4.3.1.18</ecNumber>
    </recommendedName>
    <alternativeName>
        <fullName evidence="1">D-serine deaminase</fullName>
        <shortName evidence="1">DSD</shortName>
    </alternativeName>
</protein>
<comment type="catalytic activity">
    <reaction evidence="1">
        <text>D-serine = pyruvate + NH4(+)</text>
        <dbReference type="Rhea" id="RHEA:13977"/>
        <dbReference type="ChEBI" id="CHEBI:15361"/>
        <dbReference type="ChEBI" id="CHEBI:28938"/>
        <dbReference type="ChEBI" id="CHEBI:35247"/>
        <dbReference type="EC" id="4.3.1.18"/>
    </reaction>
</comment>
<comment type="cofactor">
    <cofactor evidence="1">
        <name>pyridoxal 5'-phosphate</name>
        <dbReference type="ChEBI" id="CHEBI:597326"/>
    </cofactor>
</comment>
<comment type="subunit">
    <text evidence="1">Monomer.</text>
</comment>
<comment type="similarity">
    <text evidence="1">Belongs to the serine/threonine dehydratase family. DsdA subfamily.</text>
</comment>
<feature type="chain" id="PRO_1000135761" description="D-serine dehydratase">
    <location>
        <begin position="1"/>
        <end position="442"/>
    </location>
</feature>
<feature type="modified residue" description="N6-(pyridoxal phosphate)lysine" evidence="1">
    <location>
        <position position="118"/>
    </location>
</feature>
<name>SDHD_ECO8A</name>
<gene>
    <name evidence="1" type="primary">dsdA</name>
    <name type="ordered locus">ECIAI1_2431</name>
</gene>
<dbReference type="EC" id="4.3.1.18" evidence="1"/>
<dbReference type="EMBL" id="CU928160">
    <property type="protein sequence ID" value="CAQ99273.1"/>
    <property type="molecule type" value="Genomic_DNA"/>
</dbReference>
<dbReference type="RefSeq" id="WP_000426426.1">
    <property type="nucleotide sequence ID" value="NC_011741.1"/>
</dbReference>
<dbReference type="SMR" id="B7M6N5"/>
<dbReference type="GeneID" id="75202565"/>
<dbReference type="KEGG" id="ecr:ECIAI1_2431"/>
<dbReference type="HOGENOM" id="CLU_035707_0_0_6"/>
<dbReference type="GO" id="GO:0008721">
    <property type="term" value="F:D-serine ammonia-lyase activity"/>
    <property type="evidence" value="ECO:0007669"/>
    <property type="project" value="UniProtKB-EC"/>
</dbReference>
<dbReference type="GO" id="GO:0016836">
    <property type="term" value="F:hydro-lyase activity"/>
    <property type="evidence" value="ECO:0007669"/>
    <property type="project" value="UniProtKB-UniRule"/>
</dbReference>
<dbReference type="GO" id="GO:0030170">
    <property type="term" value="F:pyridoxal phosphate binding"/>
    <property type="evidence" value="ECO:0007669"/>
    <property type="project" value="InterPro"/>
</dbReference>
<dbReference type="GO" id="GO:0036088">
    <property type="term" value="P:D-serine catabolic process"/>
    <property type="evidence" value="ECO:0007669"/>
    <property type="project" value="TreeGrafter"/>
</dbReference>
<dbReference type="GO" id="GO:0009097">
    <property type="term" value="P:isoleucine biosynthetic process"/>
    <property type="evidence" value="ECO:0007669"/>
    <property type="project" value="TreeGrafter"/>
</dbReference>
<dbReference type="CDD" id="cd06447">
    <property type="entry name" value="D-Ser-dehyd"/>
    <property type="match status" value="1"/>
</dbReference>
<dbReference type="FunFam" id="3.40.50.1100:FF:000018">
    <property type="entry name" value="D-serine dehydratase"/>
    <property type="match status" value="1"/>
</dbReference>
<dbReference type="Gene3D" id="3.40.50.1100">
    <property type="match status" value="2"/>
</dbReference>
<dbReference type="HAMAP" id="MF_01030">
    <property type="entry name" value="D_Ser_dehydrat"/>
    <property type="match status" value="1"/>
</dbReference>
<dbReference type="InterPro" id="IPR011780">
    <property type="entry name" value="D_Ser_am_lyase"/>
</dbReference>
<dbReference type="InterPro" id="IPR050147">
    <property type="entry name" value="Ser/Thr_Dehydratase"/>
</dbReference>
<dbReference type="InterPro" id="IPR000634">
    <property type="entry name" value="Ser/Thr_deHydtase_PyrdxlP-BS"/>
</dbReference>
<dbReference type="InterPro" id="IPR001926">
    <property type="entry name" value="TrpB-like_PALP"/>
</dbReference>
<dbReference type="InterPro" id="IPR036052">
    <property type="entry name" value="TrpB-like_PALP_sf"/>
</dbReference>
<dbReference type="NCBIfam" id="TIGR02035">
    <property type="entry name" value="D_Ser_am_lyase"/>
    <property type="match status" value="1"/>
</dbReference>
<dbReference type="NCBIfam" id="NF002823">
    <property type="entry name" value="PRK02991.1"/>
    <property type="match status" value="1"/>
</dbReference>
<dbReference type="PANTHER" id="PTHR48078:SF9">
    <property type="entry name" value="D-SERINE DEHYDRATASE"/>
    <property type="match status" value="1"/>
</dbReference>
<dbReference type="PANTHER" id="PTHR48078">
    <property type="entry name" value="THREONINE DEHYDRATASE, MITOCHONDRIAL-RELATED"/>
    <property type="match status" value="1"/>
</dbReference>
<dbReference type="Pfam" id="PF00291">
    <property type="entry name" value="PALP"/>
    <property type="match status" value="1"/>
</dbReference>
<dbReference type="SUPFAM" id="SSF53686">
    <property type="entry name" value="Tryptophan synthase beta subunit-like PLP-dependent enzymes"/>
    <property type="match status" value="1"/>
</dbReference>
<dbReference type="PROSITE" id="PS00165">
    <property type="entry name" value="DEHYDRATASE_SER_THR"/>
    <property type="match status" value="1"/>
</dbReference>
<accession>B7M6N5</accession>
<evidence type="ECO:0000255" key="1">
    <source>
        <dbReference type="HAMAP-Rule" id="MF_01030"/>
    </source>
</evidence>